<name>HIS1_BURM9</name>
<organism>
    <name type="scientific">Burkholderia mallei (strain NCTC 10229)</name>
    <dbReference type="NCBI Taxonomy" id="412022"/>
    <lineage>
        <taxon>Bacteria</taxon>
        <taxon>Pseudomonadati</taxon>
        <taxon>Pseudomonadota</taxon>
        <taxon>Betaproteobacteria</taxon>
        <taxon>Burkholderiales</taxon>
        <taxon>Burkholderiaceae</taxon>
        <taxon>Burkholderia</taxon>
        <taxon>pseudomallei group</taxon>
    </lineage>
</organism>
<protein>
    <recommendedName>
        <fullName evidence="1">ATP phosphoribosyltransferase</fullName>
        <shortName evidence="1">ATP-PRT</shortName>
        <shortName evidence="1">ATP-PRTase</shortName>
        <ecNumber evidence="1">2.4.2.17</ecNumber>
    </recommendedName>
</protein>
<dbReference type="EC" id="2.4.2.17" evidence="1"/>
<dbReference type="EMBL" id="CP000546">
    <property type="protein sequence ID" value="ABN01020.1"/>
    <property type="molecule type" value="Genomic_DNA"/>
</dbReference>
<dbReference type="RefSeq" id="WP_004199915.1">
    <property type="nucleotide sequence ID" value="NC_008836.1"/>
</dbReference>
<dbReference type="SMR" id="A2S747"/>
<dbReference type="GeneID" id="93061757"/>
<dbReference type="KEGG" id="bml:BMA10229_A1787"/>
<dbReference type="HOGENOM" id="CLU_038115_2_0_4"/>
<dbReference type="UniPathway" id="UPA00031">
    <property type="reaction ID" value="UER00006"/>
</dbReference>
<dbReference type="Proteomes" id="UP000002283">
    <property type="component" value="Chromosome I"/>
</dbReference>
<dbReference type="GO" id="GO:0005737">
    <property type="term" value="C:cytoplasm"/>
    <property type="evidence" value="ECO:0007669"/>
    <property type="project" value="UniProtKB-SubCell"/>
</dbReference>
<dbReference type="GO" id="GO:0005524">
    <property type="term" value="F:ATP binding"/>
    <property type="evidence" value="ECO:0007669"/>
    <property type="project" value="UniProtKB-KW"/>
</dbReference>
<dbReference type="GO" id="GO:0003879">
    <property type="term" value="F:ATP phosphoribosyltransferase activity"/>
    <property type="evidence" value="ECO:0007669"/>
    <property type="project" value="UniProtKB-UniRule"/>
</dbReference>
<dbReference type="GO" id="GO:0000105">
    <property type="term" value="P:L-histidine biosynthetic process"/>
    <property type="evidence" value="ECO:0007669"/>
    <property type="project" value="UniProtKB-UniRule"/>
</dbReference>
<dbReference type="CDD" id="cd13595">
    <property type="entry name" value="PBP2_HisGs"/>
    <property type="match status" value="1"/>
</dbReference>
<dbReference type="FunFam" id="3.40.190.10:FF:000011">
    <property type="entry name" value="ATP phosphoribosyltransferase"/>
    <property type="match status" value="1"/>
</dbReference>
<dbReference type="Gene3D" id="3.40.190.10">
    <property type="entry name" value="Periplasmic binding protein-like II"/>
    <property type="match status" value="2"/>
</dbReference>
<dbReference type="HAMAP" id="MF_01018">
    <property type="entry name" value="HisG_Short"/>
    <property type="match status" value="1"/>
</dbReference>
<dbReference type="InterPro" id="IPR013820">
    <property type="entry name" value="ATP_PRibTrfase_cat"/>
</dbReference>
<dbReference type="InterPro" id="IPR018198">
    <property type="entry name" value="ATP_PRibTrfase_CS"/>
</dbReference>
<dbReference type="InterPro" id="IPR001348">
    <property type="entry name" value="ATP_PRibTrfase_HisG"/>
</dbReference>
<dbReference type="InterPro" id="IPR024893">
    <property type="entry name" value="ATP_PRibTrfase_HisG_short"/>
</dbReference>
<dbReference type="NCBIfam" id="TIGR00070">
    <property type="entry name" value="hisG"/>
    <property type="match status" value="1"/>
</dbReference>
<dbReference type="PANTHER" id="PTHR21403:SF8">
    <property type="entry name" value="ATP PHOSPHORIBOSYLTRANSFERASE"/>
    <property type="match status" value="1"/>
</dbReference>
<dbReference type="PANTHER" id="PTHR21403">
    <property type="entry name" value="ATP PHOSPHORIBOSYLTRANSFERASE ATP-PRTASE"/>
    <property type="match status" value="1"/>
</dbReference>
<dbReference type="Pfam" id="PF01634">
    <property type="entry name" value="HisG"/>
    <property type="match status" value="1"/>
</dbReference>
<dbReference type="SUPFAM" id="SSF53850">
    <property type="entry name" value="Periplasmic binding protein-like II"/>
    <property type="match status" value="1"/>
</dbReference>
<dbReference type="PROSITE" id="PS01316">
    <property type="entry name" value="ATP_P_PHORIBOSYLTR"/>
    <property type="match status" value="1"/>
</dbReference>
<sequence length="218" mass="23067">MSAPLTLALSKGRIFEETVPLLAAAGVTVAEDPETSRKLILPTTDPNLRVIVVRATDVPTYVEYGAADFGVAGKDVLLEHGGGGLYQPIDLNIARCRMSVAVPAGFDYANAVRQGARLRVATKYVETAREHFAAKGVHVDLIKLYGSMELAPLVGLADAIVDLVSSGGTLKANNLVEVEEIMPISSRLVVNQAALKLKRAALKPFLDAFERASLGSGA</sequence>
<keyword id="KW-0028">Amino-acid biosynthesis</keyword>
<keyword id="KW-0067">ATP-binding</keyword>
<keyword id="KW-0963">Cytoplasm</keyword>
<keyword id="KW-0328">Glycosyltransferase</keyword>
<keyword id="KW-0368">Histidine biosynthesis</keyword>
<keyword id="KW-0547">Nucleotide-binding</keyword>
<keyword id="KW-0808">Transferase</keyword>
<comment type="function">
    <text evidence="1">Catalyzes the condensation of ATP and 5-phosphoribose 1-diphosphate to form N'-(5'-phosphoribosyl)-ATP (PR-ATP). Has a crucial role in the pathway because the rate of histidine biosynthesis seems to be controlled primarily by regulation of HisG enzymatic activity.</text>
</comment>
<comment type="catalytic activity">
    <reaction evidence="1">
        <text>1-(5-phospho-beta-D-ribosyl)-ATP + diphosphate = 5-phospho-alpha-D-ribose 1-diphosphate + ATP</text>
        <dbReference type="Rhea" id="RHEA:18473"/>
        <dbReference type="ChEBI" id="CHEBI:30616"/>
        <dbReference type="ChEBI" id="CHEBI:33019"/>
        <dbReference type="ChEBI" id="CHEBI:58017"/>
        <dbReference type="ChEBI" id="CHEBI:73183"/>
        <dbReference type="EC" id="2.4.2.17"/>
    </reaction>
</comment>
<comment type="pathway">
    <text evidence="1">Amino-acid biosynthesis; L-histidine biosynthesis; L-histidine from 5-phospho-alpha-D-ribose 1-diphosphate: step 1/9.</text>
</comment>
<comment type="subunit">
    <text evidence="1">Heteromultimer composed of HisG and HisZ subunits.</text>
</comment>
<comment type="subcellular location">
    <subcellularLocation>
        <location evidence="1">Cytoplasm</location>
    </subcellularLocation>
</comment>
<comment type="domain">
    <text>Lacks the C-terminal regulatory region which is replaced by HisZ.</text>
</comment>
<comment type="similarity">
    <text evidence="1">Belongs to the ATP phosphoribosyltransferase family. Short subfamily.</text>
</comment>
<proteinExistence type="inferred from homology"/>
<reference key="1">
    <citation type="journal article" date="2010" name="Genome Biol. Evol.">
        <title>Continuing evolution of Burkholderia mallei through genome reduction and large-scale rearrangements.</title>
        <authorList>
            <person name="Losada L."/>
            <person name="Ronning C.M."/>
            <person name="DeShazer D."/>
            <person name="Woods D."/>
            <person name="Fedorova N."/>
            <person name="Kim H.S."/>
            <person name="Shabalina S.A."/>
            <person name="Pearson T.R."/>
            <person name="Brinkac L."/>
            <person name="Tan P."/>
            <person name="Nandi T."/>
            <person name="Crabtree J."/>
            <person name="Badger J."/>
            <person name="Beckstrom-Sternberg S."/>
            <person name="Saqib M."/>
            <person name="Schutzer S.E."/>
            <person name="Keim P."/>
            <person name="Nierman W.C."/>
        </authorList>
    </citation>
    <scope>NUCLEOTIDE SEQUENCE [LARGE SCALE GENOMIC DNA]</scope>
    <source>
        <strain>NCTC 10229</strain>
    </source>
</reference>
<accession>A2S747</accession>
<gene>
    <name evidence="1" type="primary">hisG</name>
    <name type="ordered locus">BMA10229_A1787</name>
</gene>
<evidence type="ECO:0000255" key="1">
    <source>
        <dbReference type="HAMAP-Rule" id="MF_01018"/>
    </source>
</evidence>
<feature type="chain" id="PRO_1000063271" description="ATP phosphoribosyltransferase">
    <location>
        <begin position="1"/>
        <end position="218"/>
    </location>
</feature>